<feature type="chain" id="PRO_1000121602" description="Large ribosomal subunit protein bL28">
    <location>
        <begin position="1"/>
        <end position="72"/>
    </location>
</feature>
<reference key="1">
    <citation type="submission" date="2008-06" db="EMBL/GenBank/DDBJ databases">
        <title>Complete sequence of Chlorobaculum parvum NCIB 8327.</title>
        <authorList>
            <consortium name="US DOE Joint Genome Institute"/>
            <person name="Lucas S."/>
            <person name="Copeland A."/>
            <person name="Lapidus A."/>
            <person name="Glavina del Rio T."/>
            <person name="Dalin E."/>
            <person name="Tice H."/>
            <person name="Bruce D."/>
            <person name="Goodwin L."/>
            <person name="Pitluck S."/>
            <person name="Schmutz J."/>
            <person name="Larimer F."/>
            <person name="Land M."/>
            <person name="Hauser L."/>
            <person name="Kyrpides N."/>
            <person name="Mikhailova N."/>
            <person name="Zhao F."/>
            <person name="Li T."/>
            <person name="Liu Z."/>
            <person name="Overmann J."/>
            <person name="Bryant D.A."/>
            <person name="Richardson P."/>
        </authorList>
    </citation>
    <scope>NUCLEOTIDE SEQUENCE [LARGE SCALE GENOMIC DNA]</scope>
    <source>
        <strain>DSM 263 / NCIMB 8327</strain>
    </source>
</reference>
<sequence length="72" mass="8320">MSKVCVLTGKKPKYGNNVSHANNHTRTRFEPNLHTKRIWIEEEKRWVKVRVSAKAMKIMSKTGTAELAKLLK</sequence>
<evidence type="ECO:0000255" key="1">
    <source>
        <dbReference type="HAMAP-Rule" id="MF_00373"/>
    </source>
</evidence>
<evidence type="ECO:0000305" key="2"/>
<gene>
    <name evidence="1" type="primary">rpmB</name>
    <name type="ordered locus">Cpar_0575</name>
</gene>
<comment type="similarity">
    <text evidence="1">Belongs to the bacterial ribosomal protein bL28 family.</text>
</comment>
<protein>
    <recommendedName>
        <fullName evidence="1">Large ribosomal subunit protein bL28</fullName>
    </recommendedName>
    <alternativeName>
        <fullName evidence="2">50S ribosomal protein L28</fullName>
    </alternativeName>
</protein>
<organism>
    <name type="scientific">Chlorobaculum parvum (strain DSM 263 / NCIMB 8327)</name>
    <name type="common">Chlorobium vibrioforme subsp. thiosulfatophilum</name>
    <dbReference type="NCBI Taxonomy" id="517417"/>
    <lineage>
        <taxon>Bacteria</taxon>
        <taxon>Pseudomonadati</taxon>
        <taxon>Chlorobiota</taxon>
        <taxon>Chlorobiia</taxon>
        <taxon>Chlorobiales</taxon>
        <taxon>Chlorobiaceae</taxon>
        <taxon>Chlorobaculum</taxon>
    </lineage>
</organism>
<keyword id="KW-0687">Ribonucleoprotein</keyword>
<keyword id="KW-0689">Ribosomal protein</keyword>
<proteinExistence type="inferred from homology"/>
<dbReference type="EMBL" id="CP001099">
    <property type="protein sequence ID" value="ACF10995.1"/>
    <property type="molecule type" value="Genomic_DNA"/>
</dbReference>
<dbReference type="RefSeq" id="WP_012501828.1">
    <property type="nucleotide sequence ID" value="NC_011027.1"/>
</dbReference>
<dbReference type="SMR" id="B3QM42"/>
<dbReference type="STRING" id="517417.Cpar_0575"/>
<dbReference type="KEGG" id="cpc:Cpar_0575"/>
<dbReference type="eggNOG" id="COG0227">
    <property type="taxonomic scope" value="Bacteria"/>
</dbReference>
<dbReference type="HOGENOM" id="CLU_064548_3_1_10"/>
<dbReference type="OrthoDB" id="9805609at2"/>
<dbReference type="Proteomes" id="UP000008811">
    <property type="component" value="Chromosome"/>
</dbReference>
<dbReference type="GO" id="GO:1990904">
    <property type="term" value="C:ribonucleoprotein complex"/>
    <property type="evidence" value="ECO:0007669"/>
    <property type="project" value="UniProtKB-KW"/>
</dbReference>
<dbReference type="GO" id="GO:0005840">
    <property type="term" value="C:ribosome"/>
    <property type="evidence" value="ECO:0007669"/>
    <property type="project" value="UniProtKB-KW"/>
</dbReference>
<dbReference type="GO" id="GO:0003735">
    <property type="term" value="F:structural constituent of ribosome"/>
    <property type="evidence" value="ECO:0007669"/>
    <property type="project" value="InterPro"/>
</dbReference>
<dbReference type="GO" id="GO:0006412">
    <property type="term" value="P:translation"/>
    <property type="evidence" value="ECO:0007669"/>
    <property type="project" value="UniProtKB-UniRule"/>
</dbReference>
<dbReference type="FunFam" id="2.30.170.40:FF:000001">
    <property type="entry name" value="50S ribosomal protein L28"/>
    <property type="match status" value="1"/>
</dbReference>
<dbReference type="Gene3D" id="2.30.170.40">
    <property type="entry name" value="Ribosomal protein L28/L24"/>
    <property type="match status" value="1"/>
</dbReference>
<dbReference type="HAMAP" id="MF_00373">
    <property type="entry name" value="Ribosomal_bL28"/>
    <property type="match status" value="1"/>
</dbReference>
<dbReference type="InterPro" id="IPR026569">
    <property type="entry name" value="Ribosomal_bL28"/>
</dbReference>
<dbReference type="InterPro" id="IPR034704">
    <property type="entry name" value="Ribosomal_bL28/bL31-like_sf"/>
</dbReference>
<dbReference type="InterPro" id="IPR001383">
    <property type="entry name" value="Ribosomal_bL28_bact-type"/>
</dbReference>
<dbReference type="InterPro" id="IPR037147">
    <property type="entry name" value="Ribosomal_bL28_sf"/>
</dbReference>
<dbReference type="NCBIfam" id="TIGR00009">
    <property type="entry name" value="L28"/>
    <property type="match status" value="1"/>
</dbReference>
<dbReference type="PANTHER" id="PTHR13528">
    <property type="entry name" value="39S RIBOSOMAL PROTEIN L28, MITOCHONDRIAL"/>
    <property type="match status" value="1"/>
</dbReference>
<dbReference type="PANTHER" id="PTHR13528:SF2">
    <property type="entry name" value="LARGE RIBOSOMAL SUBUNIT PROTEIN BL28M"/>
    <property type="match status" value="1"/>
</dbReference>
<dbReference type="Pfam" id="PF00830">
    <property type="entry name" value="Ribosomal_L28"/>
    <property type="match status" value="1"/>
</dbReference>
<dbReference type="SUPFAM" id="SSF143800">
    <property type="entry name" value="L28p-like"/>
    <property type="match status" value="1"/>
</dbReference>
<accession>B3QM42</accession>
<name>RL28_CHLP8</name>